<dbReference type="EC" id="2.8.4.4" evidence="1"/>
<dbReference type="EMBL" id="CP001063">
    <property type="protein sequence ID" value="ACD07075.1"/>
    <property type="molecule type" value="Genomic_DNA"/>
</dbReference>
<dbReference type="RefSeq" id="WP_000049381.1">
    <property type="nucleotide sequence ID" value="NC_010658.1"/>
</dbReference>
<dbReference type="SMR" id="B2TV93"/>
<dbReference type="STRING" id="344609.SbBS512_E2510"/>
<dbReference type="KEGG" id="sbc:SbBS512_E2510"/>
<dbReference type="HOGENOM" id="CLU_018697_0_0_6"/>
<dbReference type="Proteomes" id="UP000001030">
    <property type="component" value="Chromosome"/>
</dbReference>
<dbReference type="GO" id="GO:0005829">
    <property type="term" value="C:cytosol"/>
    <property type="evidence" value="ECO:0007669"/>
    <property type="project" value="TreeGrafter"/>
</dbReference>
<dbReference type="GO" id="GO:0051539">
    <property type="term" value="F:4 iron, 4 sulfur cluster binding"/>
    <property type="evidence" value="ECO:0007669"/>
    <property type="project" value="UniProtKB-UniRule"/>
</dbReference>
<dbReference type="GO" id="GO:0035599">
    <property type="term" value="F:aspartic acid methylthiotransferase activity"/>
    <property type="evidence" value="ECO:0007669"/>
    <property type="project" value="TreeGrafter"/>
</dbReference>
<dbReference type="GO" id="GO:0046872">
    <property type="term" value="F:metal ion binding"/>
    <property type="evidence" value="ECO:0007669"/>
    <property type="project" value="UniProtKB-KW"/>
</dbReference>
<dbReference type="GO" id="GO:0103039">
    <property type="term" value="F:protein methylthiotransferase activity"/>
    <property type="evidence" value="ECO:0007669"/>
    <property type="project" value="UniProtKB-EC"/>
</dbReference>
<dbReference type="GO" id="GO:0006400">
    <property type="term" value="P:tRNA modification"/>
    <property type="evidence" value="ECO:0007669"/>
    <property type="project" value="InterPro"/>
</dbReference>
<dbReference type="CDD" id="cd01335">
    <property type="entry name" value="Radical_SAM"/>
    <property type="match status" value="1"/>
</dbReference>
<dbReference type="FunFam" id="2.40.50.140:FF:000060">
    <property type="entry name" value="Ribosomal protein S12 methylthiotransferase RimO"/>
    <property type="match status" value="1"/>
</dbReference>
<dbReference type="FunFam" id="3.40.50.12160:FF:000002">
    <property type="entry name" value="Ribosomal protein S12 methylthiotransferase RimO"/>
    <property type="match status" value="1"/>
</dbReference>
<dbReference type="FunFam" id="3.80.30.20:FF:000001">
    <property type="entry name" value="tRNA-2-methylthio-N(6)-dimethylallyladenosine synthase 2"/>
    <property type="match status" value="1"/>
</dbReference>
<dbReference type="Gene3D" id="3.40.50.12160">
    <property type="entry name" value="Methylthiotransferase, N-terminal domain"/>
    <property type="match status" value="1"/>
</dbReference>
<dbReference type="Gene3D" id="2.40.50.140">
    <property type="entry name" value="Nucleic acid-binding proteins"/>
    <property type="match status" value="1"/>
</dbReference>
<dbReference type="Gene3D" id="3.80.30.20">
    <property type="entry name" value="tm_1862 like domain"/>
    <property type="match status" value="1"/>
</dbReference>
<dbReference type="HAMAP" id="MF_01865">
    <property type="entry name" value="MTTase_RimO"/>
    <property type="match status" value="1"/>
</dbReference>
<dbReference type="InterPro" id="IPR006638">
    <property type="entry name" value="Elp3/MiaA/NifB-like_rSAM"/>
</dbReference>
<dbReference type="InterPro" id="IPR005839">
    <property type="entry name" value="Methylthiotransferase"/>
</dbReference>
<dbReference type="InterPro" id="IPR020612">
    <property type="entry name" value="Methylthiotransferase_CS"/>
</dbReference>
<dbReference type="InterPro" id="IPR013848">
    <property type="entry name" value="Methylthiotransferase_N"/>
</dbReference>
<dbReference type="InterPro" id="IPR038135">
    <property type="entry name" value="Methylthiotransferase_N_sf"/>
</dbReference>
<dbReference type="InterPro" id="IPR012340">
    <property type="entry name" value="NA-bd_OB-fold"/>
</dbReference>
<dbReference type="InterPro" id="IPR005840">
    <property type="entry name" value="Ribosomal_uS12_MeSTrfase_RimO"/>
</dbReference>
<dbReference type="InterPro" id="IPR007197">
    <property type="entry name" value="rSAM"/>
</dbReference>
<dbReference type="InterPro" id="IPR023404">
    <property type="entry name" value="rSAM_horseshoe"/>
</dbReference>
<dbReference type="InterPro" id="IPR002792">
    <property type="entry name" value="TRAM_dom"/>
</dbReference>
<dbReference type="NCBIfam" id="TIGR01125">
    <property type="entry name" value="30S ribosomal protein S12 methylthiotransferase RimO"/>
    <property type="match status" value="1"/>
</dbReference>
<dbReference type="NCBIfam" id="TIGR00089">
    <property type="entry name" value="MiaB/RimO family radical SAM methylthiotransferase"/>
    <property type="match status" value="1"/>
</dbReference>
<dbReference type="PANTHER" id="PTHR43837">
    <property type="entry name" value="RIBOSOMAL PROTEIN S12 METHYLTHIOTRANSFERASE RIMO"/>
    <property type="match status" value="1"/>
</dbReference>
<dbReference type="PANTHER" id="PTHR43837:SF1">
    <property type="entry name" value="RIBOSOMAL PROTEIN US12 METHYLTHIOTRANSFERASE RIMO"/>
    <property type="match status" value="1"/>
</dbReference>
<dbReference type="Pfam" id="PF04055">
    <property type="entry name" value="Radical_SAM"/>
    <property type="match status" value="1"/>
</dbReference>
<dbReference type="Pfam" id="PF18693">
    <property type="entry name" value="TRAM_2"/>
    <property type="match status" value="1"/>
</dbReference>
<dbReference type="Pfam" id="PF00919">
    <property type="entry name" value="UPF0004"/>
    <property type="match status" value="1"/>
</dbReference>
<dbReference type="SFLD" id="SFLDG01082">
    <property type="entry name" value="B12-binding_domain_containing"/>
    <property type="match status" value="1"/>
</dbReference>
<dbReference type="SFLD" id="SFLDG01061">
    <property type="entry name" value="methylthiotransferase"/>
    <property type="match status" value="1"/>
</dbReference>
<dbReference type="SFLD" id="SFLDF00274">
    <property type="entry name" value="ribosomal_protein_S12_methylth"/>
    <property type="match status" value="1"/>
</dbReference>
<dbReference type="SMART" id="SM00729">
    <property type="entry name" value="Elp3"/>
    <property type="match status" value="1"/>
</dbReference>
<dbReference type="SUPFAM" id="SSF102114">
    <property type="entry name" value="Radical SAM enzymes"/>
    <property type="match status" value="1"/>
</dbReference>
<dbReference type="PROSITE" id="PS51449">
    <property type="entry name" value="MTTASE_N"/>
    <property type="match status" value="1"/>
</dbReference>
<dbReference type="PROSITE" id="PS01278">
    <property type="entry name" value="MTTASE_RADICAL"/>
    <property type="match status" value="1"/>
</dbReference>
<dbReference type="PROSITE" id="PS51918">
    <property type="entry name" value="RADICAL_SAM"/>
    <property type="match status" value="1"/>
</dbReference>
<dbReference type="PROSITE" id="PS50926">
    <property type="entry name" value="TRAM"/>
    <property type="match status" value="1"/>
</dbReference>
<gene>
    <name evidence="1" type="primary">rimO</name>
    <name type="ordered locus">SbBS512_E2510</name>
</gene>
<proteinExistence type="inferred from homology"/>
<accession>B2TV93</accession>
<sequence>MSKVTPQPKIGFVSLGCPKNLVDSERILTELRTEGYDVVPSYDDADMVIVNTCGFIDSAVQESLEAIGEALNENGKVIVTGCLGAKEDQIREVHPKVLEITGPHSYEQVLEHVHHYVPKPKHNPFLSLVPEQGVKLTPRHYAYLKISEGCNHRCTFCIIPSMRGDLVSRPIGEVLSEAKRLVDAGVKEILVISQDTSAYGVDVKHRTGFHNGKPVKTSMVSLCEQLSKLGIWTRLHYVYPYPHVDDVIPLMAEGKILPYLDIPLQHASPRILKLMKRPGSVDRQLARIKQWREICPELTLRSTFIVGFPGETEEDFQMLLDFLKEARLDRVGCFKYSPVEGADANALPDQVPEEVKEERWNRFMQLQQQISAERLQEKVGREILVIIDEVDEEGAIGRSMADAPEIDGAVYLNGETNVKPGDILRVKVEHADEYDLWGSRV</sequence>
<comment type="function">
    <text evidence="1">Catalyzes the methylthiolation of an aspartic acid residue of ribosomal protein uS12.</text>
</comment>
<comment type="catalytic activity">
    <reaction evidence="1">
        <text>L-aspartate(89)-[ribosomal protein uS12]-hydrogen + (sulfur carrier)-SH + AH2 + 2 S-adenosyl-L-methionine = 3-methylsulfanyl-L-aspartate(89)-[ribosomal protein uS12]-hydrogen + (sulfur carrier)-H + 5'-deoxyadenosine + L-methionine + A + S-adenosyl-L-homocysteine + 2 H(+)</text>
        <dbReference type="Rhea" id="RHEA:37087"/>
        <dbReference type="Rhea" id="RHEA-COMP:10460"/>
        <dbReference type="Rhea" id="RHEA-COMP:10461"/>
        <dbReference type="Rhea" id="RHEA-COMP:14737"/>
        <dbReference type="Rhea" id="RHEA-COMP:14739"/>
        <dbReference type="ChEBI" id="CHEBI:13193"/>
        <dbReference type="ChEBI" id="CHEBI:15378"/>
        <dbReference type="ChEBI" id="CHEBI:17319"/>
        <dbReference type="ChEBI" id="CHEBI:17499"/>
        <dbReference type="ChEBI" id="CHEBI:29917"/>
        <dbReference type="ChEBI" id="CHEBI:29961"/>
        <dbReference type="ChEBI" id="CHEBI:57844"/>
        <dbReference type="ChEBI" id="CHEBI:57856"/>
        <dbReference type="ChEBI" id="CHEBI:59789"/>
        <dbReference type="ChEBI" id="CHEBI:64428"/>
        <dbReference type="ChEBI" id="CHEBI:73599"/>
        <dbReference type="EC" id="2.8.4.4"/>
    </reaction>
</comment>
<comment type="cofactor">
    <cofactor evidence="1">
        <name>[4Fe-4S] cluster</name>
        <dbReference type="ChEBI" id="CHEBI:49883"/>
    </cofactor>
    <text evidence="1">Binds 2 [4Fe-4S] clusters. One cluster is coordinated with 3 cysteines and an exchangeable S-adenosyl-L-methionine.</text>
</comment>
<comment type="subcellular location">
    <subcellularLocation>
        <location evidence="1">Cytoplasm</location>
    </subcellularLocation>
</comment>
<comment type="similarity">
    <text evidence="1">Belongs to the methylthiotransferase family. RimO subfamily.</text>
</comment>
<protein>
    <recommendedName>
        <fullName evidence="1">Ribosomal protein uS12 methylthiotransferase RimO</fullName>
        <shortName evidence="1">uS12 MTTase</shortName>
        <shortName evidence="1">uS12 methylthiotransferase</shortName>
        <ecNumber evidence="1">2.8.4.4</ecNumber>
    </recommendedName>
    <alternativeName>
        <fullName evidence="1">Ribosomal protein uS12 (aspartate-C(3))-methylthiotransferase</fullName>
    </alternativeName>
    <alternativeName>
        <fullName evidence="1">Ribosome maturation factor RimO</fullName>
    </alternativeName>
</protein>
<keyword id="KW-0004">4Fe-4S</keyword>
<keyword id="KW-0963">Cytoplasm</keyword>
<keyword id="KW-0408">Iron</keyword>
<keyword id="KW-0411">Iron-sulfur</keyword>
<keyword id="KW-0479">Metal-binding</keyword>
<keyword id="KW-1185">Reference proteome</keyword>
<keyword id="KW-0949">S-adenosyl-L-methionine</keyword>
<keyword id="KW-0808">Transferase</keyword>
<organism>
    <name type="scientific">Shigella boydii serotype 18 (strain CDC 3083-94 / BS512)</name>
    <dbReference type="NCBI Taxonomy" id="344609"/>
    <lineage>
        <taxon>Bacteria</taxon>
        <taxon>Pseudomonadati</taxon>
        <taxon>Pseudomonadota</taxon>
        <taxon>Gammaproteobacteria</taxon>
        <taxon>Enterobacterales</taxon>
        <taxon>Enterobacteriaceae</taxon>
        <taxon>Shigella</taxon>
    </lineage>
</organism>
<reference key="1">
    <citation type="submission" date="2008-05" db="EMBL/GenBank/DDBJ databases">
        <title>Complete sequence of Shigella boydii serotype 18 strain BS512.</title>
        <authorList>
            <person name="Rasko D.A."/>
            <person name="Rosovitz M."/>
            <person name="Maurelli A.T."/>
            <person name="Myers G."/>
            <person name="Seshadri R."/>
            <person name="Cer R."/>
            <person name="Jiang L."/>
            <person name="Ravel J."/>
            <person name="Sebastian Y."/>
        </authorList>
    </citation>
    <scope>NUCLEOTIDE SEQUENCE [LARGE SCALE GENOMIC DNA]</scope>
    <source>
        <strain>CDC 3083-94 / BS512</strain>
    </source>
</reference>
<evidence type="ECO:0000255" key="1">
    <source>
        <dbReference type="HAMAP-Rule" id="MF_01865"/>
    </source>
</evidence>
<evidence type="ECO:0000255" key="2">
    <source>
        <dbReference type="PROSITE-ProRule" id="PRU01266"/>
    </source>
</evidence>
<name>RIMO_SHIB3</name>
<feature type="chain" id="PRO_0000375009" description="Ribosomal protein uS12 methylthiotransferase RimO">
    <location>
        <begin position="1"/>
        <end position="441"/>
    </location>
</feature>
<feature type="domain" description="MTTase N-terminal" evidence="1">
    <location>
        <begin position="8"/>
        <end position="118"/>
    </location>
</feature>
<feature type="domain" description="Radical SAM core" evidence="2">
    <location>
        <begin position="136"/>
        <end position="373"/>
    </location>
</feature>
<feature type="domain" description="TRAM" evidence="1">
    <location>
        <begin position="376"/>
        <end position="441"/>
    </location>
</feature>
<feature type="binding site" evidence="1">
    <location>
        <position position="17"/>
    </location>
    <ligand>
        <name>[4Fe-4S] cluster</name>
        <dbReference type="ChEBI" id="CHEBI:49883"/>
        <label>1</label>
    </ligand>
</feature>
<feature type="binding site" evidence="1">
    <location>
        <position position="53"/>
    </location>
    <ligand>
        <name>[4Fe-4S] cluster</name>
        <dbReference type="ChEBI" id="CHEBI:49883"/>
        <label>1</label>
    </ligand>
</feature>
<feature type="binding site" evidence="1">
    <location>
        <position position="82"/>
    </location>
    <ligand>
        <name>[4Fe-4S] cluster</name>
        <dbReference type="ChEBI" id="CHEBI:49883"/>
        <label>1</label>
    </ligand>
</feature>
<feature type="binding site" evidence="1">
    <location>
        <position position="150"/>
    </location>
    <ligand>
        <name>[4Fe-4S] cluster</name>
        <dbReference type="ChEBI" id="CHEBI:49883"/>
        <label>2</label>
        <note>4Fe-4S-S-AdoMet</note>
    </ligand>
</feature>
<feature type="binding site" evidence="1">
    <location>
        <position position="154"/>
    </location>
    <ligand>
        <name>[4Fe-4S] cluster</name>
        <dbReference type="ChEBI" id="CHEBI:49883"/>
        <label>2</label>
        <note>4Fe-4S-S-AdoMet</note>
    </ligand>
</feature>
<feature type="binding site" evidence="1">
    <location>
        <position position="157"/>
    </location>
    <ligand>
        <name>[4Fe-4S] cluster</name>
        <dbReference type="ChEBI" id="CHEBI:49883"/>
        <label>2</label>
        <note>4Fe-4S-S-AdoMet</note>
    </ligand>
</feature>